<comment type="function">
    <text evidence="1">Condenses 4-methyl-5-(beta-hydroxyethyl)thiazole monophosphate (THZ-P) and 2-methyl-4-amino-5-hydroxymethyl pyrimidine pyrophosphate (HMP-PP) to form thiamine monophosphate (TMP).</text>
</comment>
<comment type="catalytic activity">
    <reaction evidence="1">
        <text>2-[(2R,5Z)-2-carboxy-4-methylthiazol-5(2H)-ylidene]ethyl phosphate + 4-amino-2-methyl-5-(diphosphooxymethyl)pyrimidine + 2 H(+) = thiamine phosphate + CO2 + diphosphate</text>
        <dbReference type="Rhea" id="RHEA:47844"/>
        <dbReference type="ChEBI" id="CHEBI:15378"/>
        <dbReference type="ChEBI" id="CHEBI:16526"/>
        <dbReference type="ChEBI" id="CHEBI:33019"/>
        <dbReference type="ChEBI" id="CHEBI:37575"/>
        <dbReference type="ChEBI" id="CHEBI:57841"/>
        <dbReference type="ChEBI" id="CHEBI:62899"/>
        <dbReference type="EC" id="2.5.1.3"/>
    </reaction>
</comment>
<comment type="catalytic activity">
    <reaction evidence="1">
        <text>2-(2-carboxy-4-methylthiazol-5-yl)ethyl phosphate + 4-amino-2-methyl-5-(diphosphooxymethyl)pyrimidine + 2 H(+) = thiamine phosphate + CO2 + diphosphate</text>
        <dbReference type="Rhea" id="RHEA:47848"/>
        <dbReference type="ChEBI" id="CHEBI:15378"/>
        <dbReference type="ChEBI" id="CHEBI:16526"/>
        <dbReference type="ChEBI" id="CHEBI:33019"/>
        <dbReference type="ChEBI" id="CHEBI:37575"/>
        <dbReference type="ChEBI" id="CHEBI:57841"/>
        <dbReference type="ChEBI" id="CHEBI:62890"/>
        <dbReference type="EC" id="2.5.1.3"/>
    </reaction>
</comment>
<comment type="catalytic activity">
    <reaction evidence="1">
        <text>4-methyl-5-(2-phosphooxyethyl)-thiazole + 4-amino-2-methyl-5-(diphosphooxymethyl)pyrimidine + H(+) = thiamine phosphate + diphosphate</text>
        <dbReference type="Rhea" id="RHEA:22328"/>
        <dbReference type="ChEBI" id="CHEBI:15378"/>
        <dbReference type="ChEBI" id="CHEBI:33019"/>
        <dbReference type="ChEBI" id="CHEBI:37575"/>
        <dbReference type="ChEBI" id="CHEBI:57841"/>
        <dbReference type="ChEBI" id="CHEBI:58296"/>
        <dbReference type="EC" id="2.5.1.3"/>
    </reaction>
</comment>
<comment type="cofactor">
    <cofactor evidence="1">
        <name>Mg(2+)</name>
        <dbReference type="ChEBI" id="CHEBI:18420"/>
    </cofactor>
    <text evidence="1">Binds 1 Mg(2+) ion per subunit.</text>
</comment>
<comment type="pathway">
    <text evidence="1">Cofactor biosynthesis; thiamine diphosphate biosynthesis; thiamine phosphate from 4-amino-2-methyl-5-diphosphomethylpyrimidine and 4-methyl-5-(2-phosphoethyl)-thiazole: step 1/1.</text>
</comment>
<comment type="similarity">
    <text evidence="1">Belongs to the thiamine-phosphate synthase family.</text>
</comment>
<feature type="chain" id="PRO_0000157057" description="Thiamine-phosphate synthase 2">
    <location>
        <begin position="1"/>
        <end position="210"/>
    </location>
</feature>
<feature type="binding site" evidence="1">
    <location>
        <begin position="38"/>
        <end position="42"/>
    </location>
    <ligand>
        <name>4-amino-2-methyl-5-(diphosphooxymethyl)pyrimidine</name>
        <dbReference type="ChEBI" id="CHEBI:57841"/>
    </ligand>
</feature>
<feature type="binding site" evidence="1">
    <location>
        <position position="70"/>
    </location>
    <ligand>
        <name>4-amino-2-methyl-5-(diphosphooxymethyl)pyrimidine</name>
        <dbReference type="ChEBI" id="CHEBI:57841"/>
    </ligand>
</feature>
<feature type="binding site" evidence="1">
    <location>
        <position position="71"/>
    </location>
    <ligand>
        <name>Mg(2+)</name>
        <dbReference type="ChEBI" id="CHEBI:18420"/>
    </ligand>
</feature>
<feature type="binding site" evidence="1">
    <location>
        <position position="90"/>
    </location>
    <ligand>
        <name>Mg(2+)</name>
        <dbReference type="ChEBI" id="CHEBI:18420"/>
    </ligand>
</feature>
<feature type="binding site" evidence="1">
    <location>
        <position position="109"/>
    </location>
    <ligand>
        <name>4-amino-2-methyl-5-(diphosphooxymethyl)pyrimidine</name>
        <dbReference type="ChEBI" id="CHEBI:57841"/>
    </ligand>
</feature>
<feature type="binding site" evidence="1">
    <location>
        <begin position="135"/>
        <end position="137"/>
    </location>
    <ligand>
        <name>2-[(2R,5Z)-2-carboxy-4-methylthiazol-5(2H)-ylidene]ethyl phosphate</name>
        <dbReference type="ChEBI" id="CHEBI:62899"/>
    </ligand>
</feature>
<feature type="binding site" evidence="1">
    <location>
        <position position="138"/>
    </location>
    <ligand>
        <name>4-amino-2-methyl-5-(diphosphooxymethyl)pyrimidine</name>
        <dbReference type="ChEBI" id="CHEBI:57841"/>
    </ligand>
</feature>
<feature type="binding site" evidence="1">
    <location>
        <position position="165"/>
    </location>
    <ligand>
        <name>2-[(2R,5Z)-2-carboxy-4-methylthiazol-5(2H)-ylidene]ethyl phosphate</name>
        <dbReference type="ChEBI" id="CHEBI:62899"/>
    </ligand>
</feature>
<gene>
    <name evidence="1" type="primary">thiE2</name>
    <name type="ordered locus">SP_0725</name>
</gene>
<evidence type="ECO:0000255" key="1">
    <source>
        <dbReference type="HAMAP-Rule" id="MF_00097"/>
    </source>
</evidence>
<keyword id="KW-0460">Magnesium</keyword>
<keyword id="KW-0479">Metal-binding</keyword>
<keyword id="KW-1185">Reference proteome</keyword>
<keyword id="KW-0784">Thiamine biosynthesis</keyword>
<keyword id="KW-0808">Transferase</keyword>
<proteinExistence type="inferred from homology"/>
<sequence length="210" mass="22770">MNREALRLYLVTNRYQDSVESFLAKVETACRSGVTIVQLREKNLTTNQYYQLAKQVKEITDAYQVPLIIDDRLDVCLAVDAAGLHIGDDELPVSVARKVLGPEKILGVTAKTVKRALEAEKSGADYLGTGAIFPTTTKENAPITLISTLKTICQTVAIPVVAIGGLTSENIDQLMGTGIAGVAVVRDLMQAEDIEAKTQAFLKKLHNILS</sequence>
<dbReference type="EC" id="2.5.1.3" evidence="1"/>
<dbReference type="EMBL" id="AE005672">
    <property type="protein sequence ID" value="AAK74866.1"/>
    <property type="molecule type" value="Genomic_DNA"/>
</dbReference>
<dbReference type="PIR" id="A95084">
    <property type="entry name" value="A95084"/>
</dbReference>
<dbReference type="SMR" id="P66920"/>
<dbReference type="PaxDb" id="170187-SP_0725"/>
<dbReference type="EnsemblBacteria" id="AAK74866">
    <property type="protein sequence ID" value="AAK74866"/>
    <property type="gene ID" value="SP_0725"/>
</dbReference>
<dbReference type="KEGG" id="spn:SP_0725"/>
<dbReference type="eggNOG" id="COG0352">
    <property type="taxonomic scope" value="Bacteria"/>
</dbReference>
<dbReference type="PhylomeDB" id="P66920"/>
<dbReference type="BioCyc" id="SPNE170187:G1FZB-744-MONOMER"/>
<dbReference type="UniPathway" id="UPA00060">
    <property type="reaction ID" value="UER00141"/>
</dbReference>
<dbReference type="Proteomes" id="UP000000585">
    <property type="component" value="Chromosome"/>
</dbReference>
<dbReference type="GO" id="GO:0005737">
    <property type="term" value="C:cytoplasm"/>
    <property type="evidence" value="ECO:0007669"/>
    <property type="project" value="TreeGrafter"/>
</dbReference>
<dbReference type="GO" id="GO:0000287">
    <property type="term" value="F:magnesium ion binding"/>
    <property type="evidence" value="ECO:0007669"/>
    <property type="project" value="UniProtKB-UniRule"/>
</dbReference>
<dbReference type="GO" id="GO:0004789">
    <property type="term" value="F:thiamine-phosphate diphosphorylase activity"/>
    <property type="evidence" value="ECO:0007669"/>
    <property type="project" value="UniProtKB-UniRule"/>
</dbReference>
<dbReference type="GO" id="GO:0009228">
    <property type="term" value="P:thiamine biosynthetic process"/>
    <property type="evidence" value="ECO:0007669"/>
    <property type="project" value="UniProtKB-KW"/>
</dbReference>
<dbReference type="GO" id="GO:0009229">
    <property type="term" value="P:thiamine diphosphate biosynthetic process"/>
    <property type="evidence" value="ECO:0007669"/>
    <property type="project" value="UniProtKB-UniRule"/>
</dbReference>
<dbReference type="CDD" id="cd00564">
    <property type="entry name" value="TMP_TenI"/>
    <property type="match status" value="1"/>
</dbReference>
<dbReference type="FunFam" id="3.20.20.70:FF:000096">
    <property type="entry name" value="Thiamine-phosphate synthase"/>
    <property type="match status" value="1"/>
</dbReference>
<dbReference type="Gene3D" id="3.20.20.70">
    <property type="entry name" value="Aldolase class I"/>
    <property type="match status" value="1"/>
</dbReference>
<dbReference type="HAMAP" id="MF_00097">
    <property type="entry name" value="TMP_synthase"/>
    <property type="match status" value="1"/>
</dbReference>
<dbReference type="InterPro" id="IPR013785">
    <property type="entry name" value="Aldolase_TIM"/>
</dbReference>
<dbReference type="InterPro" id="IPR036206">
    <property type="entry name" value="ThiamineP_synth_sf"/>
</dbReference>
<dbReference type="InterPro" id="IPR022998">
    <property type="entry name" value="ThiamineP_synth_TenI"/>
</dbReference>
<dbReference type="InterPro" id="IPR034291">
    <property type="entry name" value="TMP_synthase"/>
</dbReference>
<dbReference type="NCBIfam" id="TIGR00693">
    <property type="entry name" value="thiE"/>
    <property type="match status" value="1"/>
</dbReference>
<dbReference type="PANTHER" id="PTHR20857">
    <property type="entry name" value="THIAMINE-PHOSPHATE PYROPHOSPHORYLASE"/>
    <property type="match status" value="1"/>
</dbReference>
<dbReference type="PANTHER" id="PTHR20857:SF15">
    <property type="entry name" value="THIAMINE-PHOSPHATE SYNTHASE"/>
    <property type="match status" value="1"/>
</dbReference>
<dbReference type="Pfam" id="PF02581">
    <property type="entry name" value="TMP-TENI"/>
    <property type="match status" value="1"/>
</dbReference>
<dbReference type="SUPFAM" id="SSF51391">
    <property type="entry name" value="Thiamin phosphate synthase"/>
    <property type="match status" value="1"/>
</dbReference>
<protein>
    <recommendedName>
        <fullName evidence="1">Thiamine-phosphate synthase 2</fullName>
        <shortName evidence="1">TP synthase 2</shortName>
        <shortName evidence="1">TPS 2</shortName>
        <ecNumber evidence="1">2.5.1.3</ecNumber>
    </recommendedName>
    <alternativeName>
        <fullName evidence="1">Thiamine-phosphate pyrophosphorylase 2</fullName>
        <shortName evidence="1">TMP pyrophosphorylase 2</shortName>
        <shortName evidence="1">TMP-PPase 2</shortName>
    </alternativeName>
</protein>
<accession>P66920</accession>
<accession>Q97RR8</accession>
<organism>
    <name type="scientific">Streptococcus pneumoniae serotype 4 (strain ATCC BAA-334 / TIGR4)</name>
    <dbReference type="NCBI Taxonomy" id="170187"/>
    <lineage>
        <taxon>Bacteria</taxon>
        <taxon>Bacillati</taxon>
        <taxon>Bacillota</taxon>
        <taxon>Bacilli</taxon>
        <taxon>Lactobacillales</taxon>
        <taxon>Streptococcaceae</taxon>
        <taxon>Streptococcus</taxon>
    </lineage>
</organism>
<reference key="1">
    <citation type="journal article" date="2001" name="Science">
        <title>Complete genome sequence of a virulent isolate of Streptococcus pneumoniae.</title>
        <authorList>
            <person name="Tettelin H."/>
            <person name="Nelson K.E."/>
            <person name="Paulsen I.T."/>
            <person name="Eisen J.A."/>
            <person name="Read T.D."/>
            <person name="Peterson S.N."/>
            <person name="Heidelberg J.F."/>
            <person name="DeBoy R.T."/>
            <person name="Haft D.H."/>
            <person name="Dodson R.J."/>
            <person name="Durkin A.S."/>
            <person name="Gwinn M.L."/>
            <person name="Kolonay J.F."/>
            <person name="Nelson W.C."/>
            <person name="Peterson J.D."/>
            <person name="Umayam L.A."/>
            <person name="White O."/>
            <person name="Salzberg S.L."/>
            <person name="Lewis M.R."/>
            <person name="Radune D."/>
            <person name="Holtzapple E.K."/>
            <person name="Khouri H.M."/>
            <person name="Wolf A.M."/>
            <person name="Utterback T.R."/>
            <person name="Hansen C.L."/>
            <person name="McDonald L.A."/>
            <person name="Feldblyum T.V."/>
            <person name="Angiuoli S.V."/>
            <person name="Dickinson T."/>
            <person name="Hickey E.K."/>
            <person name="Holt I.E."/>
            <person name="Loftus B.J."/>
            <person name="Yang F."/>
            <person name="Smith H.O."/>
            <person name="Venter J.C."/>
            <person name="Dougherty B.A."/>
            <person name="Morrison D.A."/>
            <person name="Hollingshead S.K."/>
            <person name="Fraser C.M."/>
        </authorList>
    </citation>
    <scope>NUCLEOTIDE SEQUENCE [LARGE SCALE GENOMIC DNA]</scope>
    <source>
        <strain>ATCC BAA-334 / TIGR4</strain>
    </source>
</reference>
<name>THIE2_STRPN</name>